<proteinExistence type="inferred from homology"/>
<name>FLGI_RHIJ3</name>
<comment type="function">
    <text evidence="1">Assembles around the rod to form the L-ring and probably protects the motor/basal body from shearing forces during rotation.</text>
</comment>
<comment type="subunit">
    <text evidence="1">The basal body constitutes a major portion of the flagellar organelle and consists of four rings (L,P,S, and M) mounted on a central rod.</text>
</comment>
<comment type="subcellular location">
    <subcellularLocation>
        <location evidence="1">Periplasm</location>
    </subcellularLocation>
    <subcellularLocation>
        <location evidence="1">Bacterial flagellum basal body</location>
    </subcellularLocation>
</comment>
<comment type="similarity">
    <text evidence="1">Belongs to the FlgI family.</text>
</comment>
<organism>
    <name type="scientific">Rhizobium johnstonii (strain DSM 114642 / LMG 32736 / 3841)</name>
    <name type="common">Rhizobium leguminosarum bv. viciae</name>
    <dbReference type="NCBI Taxonomy" id="216596"/>
    <lineage>
        <taxon>Bacteria</taxon>
        <taxon>Pseudomonadati</taxon>
        <taxon>Pseudomonadota</taxon>
        <taxon>Alphaproteobacteria</taxon>
        <taxon>Hyphomicrobiales</taxon>
        <taxon>Rhizobiaceae</taxon>
        <taxon>Rhizobium/Agrobacterium group</taxon>
        <taxon>Rhizobium</taxon>
        <taxon>Rhizobium johnstonii</taxon>
    </lineage>
</organism>
<reference key="1">
    <citation type="journal article" date="2006" name="Genome Biol.">
        <title>The genome of Rhizobium leguminosarum has recognizable core and accessory components.</title>
        <authorList>
            <person name="Young J.P.W."/>
            <person name="Crossman L.C."/>
            <person name="Johnston A.W.B."/>
            <person name="Thomson N.R."/>
            <person name="Ghazoui Z.F."/>
            <person name="Hull K.H."/>
            <person name="Wexler M."/>
            <person name="Curson A.R.J."/>
            <person name="Todd J.D."/>
            <person name="Poole P.S."/>
            <person name="Mauchline T.H."/>
            <person name="East A.K."/>
            <person name="Quail M.A."/>
            <person name="Churcher C."/>
            <person name="Arrowsmith C."/>
            <person name="Cherevach I."/>
            <person name="Chillingworth T."/>
            <person name="Clarke K."/>
            <person name="Cronin A."/>
            <person name="Davis P."/>
            <person name="Fraser A."/>
            <person name="Hance Z."/>
            <person name="Hauser H."/>
            <person name="Jagels K."/>
            <person name="Moule S."/>
            <person name="Mungall K."/>
            <person name="Norbertczak H."/>
            <person name="Rabbinowitsch E."/>
            <person name="Sanders M."/>
            <person name="Simmonds M."/>
            <person name="Whitehead S."/>
            <person name="Parkhill J."/>
        </authorList>
    </citation>
    <scope>NUCLEOTIDE SEQUENCE [LARGE SCALE GENOMIC DNA]</scope>
    <source>
        <strain>DSM 114642 / LMG 32736 / 3841</strain>
    </source>
</reference>
<accession>Q1MLE7</accession>
<sequence>MKLFFRFVTLVAVLAMSLANVAPAWALTSRIKDIASLQAGRDNQLIGYGLIVGLQGTGDGFRASPFTEQSMRAMLQNLGISTQGGQSNAKNTAAVMVTANLPPFASPGSRIDVTVSSLGDATSLRGGTLVMTSLSGADGQIYAVAQGAVIVSGFQAQGQAATVTEGVTTAGRVPGGAIIERELPSRFKDSVNLVLQLRNPDFSTAIRIADIVNGYASARFGGPVAEAKDSQEVVIQKPRAADLTRLMADVENLIVETDTPAKVVINERTGTIVIGSDVRVSPVAVSYGTLTVQVTETPQIIQPEPFSRGRTAVQPQTDIAAEQTGGRVAIIDGPDLRTLVAGLNNIGVKPDGIIAILQGIKSAGALQAELVLQ</sequence>
<evidence type="ECO:0000255" key="1">
    <source>
        <dbReference type="HAMAP-Rule" id="MF_00416"/>
    </source>
</evidence>
<dbReference type="EMBL" id="AM236080">
    <property type="protein sequence ID" value="CAK06206.1"/>
    <property type="molecule type" value="Genomic_DNA"/>
</dbReference>
<dbReference type="RefSeq" id="WP_011650475.1">
    <property type="nucleotide sequence ID" value="NC_008380.1"/>
</dbReference>
<dbReference type="SMR" id="Q1MLE7"/>
<dbReference type="EnsemblBacteria" id="CAK06206">
    <property type="protein sequence ID" value="CAK06206"/>
    <property type="gene ID" value="RL0712"/>
</dbReference>
<dbReference type="KEGG" id="rle:RL0712"/>
<dbReference type="eggNOG" id="COG1706">
    <property type="taxonomic scope" value="Bacteria"/>
</dbReference>
<dbReference type="HOGENOM" id="CLU_045235_1_0_5"/>
<dbReference type="Proteomes" id="UP000006575">
    <property type="component" value="Chromosome"/>
</dbReference>
<dbReference type="GO" id="GO:0009428">
    <property type="term" value="C:bacterial-type flagellum basal body, distal rod, P ring"/>
    <property type="evidence" value="ECO:0007669"/>
    <property type="project" value="InterPro"/>
</dbReference>
<dbReference type="GO" id="GO:0030288">
    <property type="term" value="C:outer membrane-bounded periplasmic space"/>
    <property type="evidence" value="ECO:0007669"/>
    <property type="project" value="InterPro"/>
</dbReference>
<dbReference type="GO" id="GO:0005198">
    <property type="term" value="F:structural molecule activity"/>
    <property type="evidence" value="ECO:0007669"/>
    <property type="project" value="InterPro"/>
</dbReference>
<dbReference type="GO" id="GO:0071973">
    <property type="term" value="P:bacterial-type flagellum-dependent cell motility"/>
    <property type="evidence" value="ECO:0007669"/>
    <property type="project" value="InterPro"/>
</dbReference>
<dbReference type="HAMAP" id="MF_00416">
    <property type="entry name" value="FlgI"/>
    <property type="match status" value="1"/>
</dbReference>
<dbReference type="InterPro" id="IPR001782">
    <property type="entry name" value="Flag_FlgI"/>
</dbReference>
<dbReference type="NCBIfam" id="NF003676">
    <property type="entry name" value="PRK05303.1"/>
    <property type="match status" value="1"/>
</dbReference>
<dbReference type="PANTHER" id="PTHR30381">
    <property type="entry name" value="FLAGELLAR P-RING PERIPLASMIC PROTEIN FLGI"/>
    <property type="match status" value="1"/>
</dbReference>
<dbReference type="PANTHER" id="PTHR30381:SF0">
    <property type="entry name" value="FLAGELLAR P-RING PROTEIN"/>
    <property type="match status" value="1"/>
</dbReference>
<dbReference type="Pfam" id="PF02119">
    <property type="entry name" value="FlgI"/>
    <property type="match status" value="1"/>
</dbReference>
<dbReference type="PRINTS" id="PR01010">
    <property type="entry name" value="FLGPRINGFLGI"/>
</dbReference>
<feature type="signal peptide" evidence="1">
    <location>
        <begin position="1"/>
        <end position="26"/>
    </location>
</feature>
<feature type="chain" id="PRO_5000078459" description="Flagellar P-ring protein">
    <location>
        <begin position="27"/>
        <end position="373"/>
    </location>
</feature>
<gene>
    <name evidence="1" type="primary">flgI</name>
    <name type="ordered locus">RL0712</name>
</gene>
<keyword id="KW-0975">Bacterial flagellum</keyword>
<keyword id="KW-0574">Periplasm</keyword>
<keyword id="KW-0732">Signal</keyword>
<protein>
    <recommendedName>
        <fullName evidence="1">Flagellar P-ring protein</fullName>
    </recommendedName>
    <alternativeName>
        <fullName evidence="1">Basal body P-ring protein</fullName>
    </alternativeName>
</protein>